<organism>
    <name type="scientific">Mus musculus</name>
    <name type="common">Mouse</name>
    <dbReference type="NCBI Taxonomy" id="10090"/>
    <lineage>
        <taxon>Eukaryota</taxon>
        <taxon>Metazoa</taxon>
        <taxon>Chordata</taxon>
        <taxon>Craniata</taxon>
        <taxon>Vertebrata</taxon>
        <taxon>Euteleostomi</taxon>
        <taxon>Mammalia</taxon>
        <taxon>Eutheria</taxon>
        <taxon>Euarchontoglires</taxon>
        <taxon>Glires</taxon>
        <taxon>Rodentia</taxon>
        <taxon>Myomorpha</taxon>
        <taxon>Muroidea</taxon>
        <taxon>Muridae</taxon>
        <taxon>Murinae</taxon>
        <taxon>Mus</taxon>
        <taxon>Mus</taxon>
    </lineage>
</organism>
<name>SND1_MOUSE</name>
<proteinExistence type="evidence at protein level"/>
<gene>
    <name type="primary">Snd1</name>
</gene>
<dbReference type="EC" id="3.1.31.1" evidence="2"/>
<dbReference type="EMBL" id="AB021491">
    <property type="protein sequence ID" value="BAA84944.1"/>
    <property type="status" value="ALT_INIT"/>
    <property type="molecule type" value="mRNA"/>
</dbReference>
<dbReference type="EMBL" id="AK088028">
    <property type="protein sequence ID" value="BAC40105.1"/>
    <property type="molecule type" value="mRNA"/>
</dbReference>
<dbReference type="EMBL" id="AK161591">
    <property type="protein sequence ID" value="BAE36479.1"/>
    <property type="molecule type" value="mRNA"/>
</dbReference>
<dbReference type="EMBL" id="BC007126">
    <property type="protein sequence ID" value="AAH07126.3"/>
    <property type="molecule type" value="mRNA"/>
</dbReference>
<dbReference type="CCDS" id="CCDS19953.1"/>
<dbReference type="RefSeq" id="NP_062750.2">
    <property type="nucleotide sequence ID" value="NM_019776.2"/>
</dbReference>
<dbReference type="SMR" id="Q78PY7"/>
<dbReference type="BioGRID" id="208002">
    <property type="interactions" value="132"/>
</dbReference>
<dbReference type="DIP" id="DIP-32118N"/>
<dbReference type="FunCoup" id="Q78PY7">
    <property type="interactions" value="4071"/>
</dbReference>
<dbReference type="IntAct" id="Q78PY7">
    <property type="interactions" value="7"/>
</dbReference>
<dbReference type="MINT" id="Q78PY7"/>
<dbReference type="STRING" id="10090.ENSMUSP00000001460"/>
<dbReference type="GlyGen" id="Q78PY7">
    <property type="glycosylation" value="2 sites, 1 N-linked glycan (1 site), 1 O-linked glycan (1 site)"/>
</dbReference>
<dbReference type="iPTMnet" id="Q78PY7"/>
<dbReference type="MetOSite" id="Q78PY7"/>
<dbReference type="PhosphoSitePlus" id="Q78PY7"/>
<dbReference type="SwissPalm" id="Q78PY7"/>
<dbReference type="jPOST" id="Q78PY7"/>
<dbReference type="PaxDb" id="10090-ENSMUSP00000001460"/>
<dbReference type="ProteomicsDB" id="261286"/>
<dbReference type="Pumba" id="Q78PY7"/>
<dbReference type="Antibodypedia" id="1126">
    <property type="antibodies" value="295 antibodies from 33 providers"/>
</dbReference>
<dbReference type="DNASU" id="56463"/>
<dbReference type="Ensembl" id="ENSMUST00000001460.14">
    <property type="protein sequence ID" value="ENSMUSP00000001460.7"/>
    <property type="gene ID" value="ENSMUSG00000001424.15"/>
</dbReference>
<dbReference type="GeneID" id="56463"/>
<dbReference type="KEGG" id="mmu:56463"/>
<dbReference type="UCSC" id="uc009bct.1">
    <property type="organism name" value="mouse"/>
</dbReference>
<dbReference type="AGR" id="MGI:1929266"/>
<dbReference type="CTD" id="27044"/>
<dbReference type="MGI" id="MGI:1929266">
    <property type="gene designation" value="Snd1"/>
</dbReference>
<dbReference type="VEuPathDB" id="HostDB:ENSMUSG00000001424"/>
<dbReference type="eggNOG" id="KOG2039">
    <property type="taxonomic scope" value="Eukaryota"/>
</dbReference>
<dbReference type="GeneTree" id="ENSGT00510000047270"/>
<dbReference type="HOGENOM" id="CLU_005966_0_0_1"/>
<dbReference type="InParanoid" id="Q78PY7"/>
<dbReference type="OMA" id="ARCADHH"/>
<dbReference type="OrthoDB" id="10023235at2759"/>
<dbReference type="PhylomeDB" id="Q78PY7"/>
<dbReference type="TreeFam" id="TF300615"/>
<dbReference type="BioGRID-ORCS" id="56463">
    <property type="hits" value="0 hits in 85 CRISPR screens"/>
</dbReference>
<dbReference type="CD-CODE" id="CE726F99">
    <property type="entry name" value="Postsynaptic density"/>
</dbReference>
<dbReference type="ChiTaRS" id="Snd1">
    <property type="organism name" value="mouse"/>
</dbReference>
<dbReference type="PRO" id="PR:Q78PY7"/>
<dbReference type="Proteomes" id="UP000000589">
    <property type="component" value="Chromosome 6"/>
</dbReference>
<dbReference type="RNAct" id="Q78PY7">
    <property type="molecule type" value="protein"/>
</dbReference>
<dbReference type="Bgee" id="ENSMUSG00000001424">
    <property type="expression patterns" value="Expressed in ectoplacental cone and 266 other cell types or tissues"/>
</dbReference>
<dbReference type="ExpressionAtlas" id="Q78PY7">
    <property type="expression patterns" value="baseline and differential"/>
</dbReference>
<dbReference type="GO" id="GO:0005737">
    <property type="term" value="C:cytoplasm"/>
    <property type="evidence" value="ECO:0000314"/>
    <property type="project" value="MGI"/>
</dbReference>
<dbReference type="GO" id="GO:0005829">
    <property type="term" value="C:cytosol"/>
    <property type="evidence" value="ECO:0007669"/>
    <property type="project" value="Ensembl"/>
</dbReference>
<dbReference type="GO" id="GO:0097433">
    <property type="term" value="C:dense body"/>
    <property type="evidence" value="ECO:0000314"/>
    <property type="project" value="MGI"/>
</dbReference>
<dbReference type="GO" id="GO:0042470">
    <property type="term" value="C:melanosome"/>
    <property type="evidence" value="ECO:0007669"/>
    <property type="project" value="UniProtKB-SubCell"/>
</dbReference>
<dbReference type="GO" id="GO:0005739">
    <property type="term" value="C:mitochondrion"/>
    <property type="evidence" value="ECO:0007005"/>
    <property type="project" value="MGI"/>
</dbReference>
<dbReference type="GO" id="GO:0005634">
    <property type="term" value="C:nucleus"/>
    <property type="evidence" value="ECO:0000314"/>
    <property type="project" value="MGI"/>
</dbReference>
<dbReference type="GO" id="GO:0031332">
    <property type="term" value="C:RNAi effector complex"/>
    <property type="evidence" value="ECO:0007669"/>
    <property type="project" value="InterPro"/>
</dbReference>
<dbReference type="GO" id="GO:0016894">
    <property type="term" value="F:endonuclease activity, active with either ribo- or deoxyribonucleic acids and producing 3'-phosphomonoesters"/>
    <property type="evidence" value="ECO:0007669"/>
    <property type="project" value="UniProtKB-EC"/>
</dbReference>
<dbReference type="GO" id="GO:1905172">
    <property type="term" value="F:RISC complex binding"/>
    <property type="evidence" value="ECO:0007669"/>
    <property type="project" value="Ensembl"/>
</dbReference>
<dbReference type="GO" id="GO:0003723">
    <property type="term" value="F:RNA binding"/>
    <property type="evidence" value="ECO:0007669"/>
    <property type="project" value="Ensembl"/>
</dbReference>
<dbReference type="GO" id="GO:0004521">
    <property type="term" value="F:RNA endonuclease activity"/>
    <property type="evidence" value="ECO:0007669"/>
    <property type="project" value="Ensembl"/>
</dbReference>
<dbReference type="GO" id="GO:0010587">
    <property type="term" value="P:miRNA catabolic process"/>
    <property type="evidence" value="ECO:0007669"/>
    <property type="project" value="Ensembl"/>
</dbReference>
<dbReference type="GO" id="GO:0010564">
    <property type="term" value="P:regulation of cell cycle process"/>
    <property type="evidence" value="ECO:0007669"/>
    <property type="project" value="Ensembl"/>
</dbReference>
<dbReference type="GO" id="GO:0031047">
    <property type="term" value="P:regulatory ncRNA-mediated gene silencing"/>
    <property type="evidence" value="ECO:0007669"/>
    <property type="project" value="InterPro"/>
</dbReference>
<dbReference type="CDD" id="cd00175">
    <property type="entry name" value="SNc"/>
    <property type="match status" value="4"/>
</dbReference>
<dbReference type="CDD" id="cd20433">
    <property type="entry name" value="Tudor_TDRD11"/>
    <property type="match status" value="1"/>
</dbReference>
<dbReference type="FunFam" id="2.30.30.140:FF:000047">
    <property type="entry name" value="Staphylococcal nuclease domain-containing protein"/>
    <property type="match status" value="1"/>
</dbReference>
<dbReference type="FunFam" id="2.40.50.90:FF:000001">
    <property type="entry name" value="Staphylococcal nuclease domain-containing protein"/>
    <property type="match status" value="1"/>
</dbReference>
<dbReference type="FunFam" id="2.40.50.90:FF:000002">
    <property type="entry name" value="Staphylococcal nuclease domain-containing protein"/>
    <property type="match status" value="1"/>
</dbReference>
<dbReference type="FunFam" id="2.40.50.90:FF:000003">
    <property type="entry name" value="Staphylococcal nuclease domain-containing protein"/>
    <property type="match status" value="1"/>
</dbReference>
<dbReference type="FunFam" id="2.40.50.90:FF:000004">
    <property type="entry name" value="Staphylococcal nuclease domain-containing protein"/>
    <property type="match status" value="1"/>
</dbReference>
<dbReference type="FunFam" id="2.40.50.90:FF:000005">
    <property type="entry name" value="Staphylococcal nuclease domain-containing protein"/>
    <property type="match status" value="1"/>
</dbReference>
<dbReference type="Gene3D" id="2.30.30.140">
    <property type="match status" value="1"/>
</dbReference>
<dbReference type="Gene3D" id="2.40.50.90">
    <property type="match status" value="5"/>
</dbReference>
<dbReference type="InterPro" id="IPR016685">
    <property type="entry name" value="Silence_cplx_Nase-comp_TudorSN"/>
</dbReference>
<dbReference type="InterPro" id="IPR035437">
    <property type="entry name" value="SNase_OB-fold_sf"/>
</dbReference>
<dbReference type="InterPro" id="IPR016071">
    <property type="entry name" value="Staphylococal_nuclease_OB-fold"/>
</dbReference>
<dbReference type="InterPro" id="IPR002071">
    <property type="entry name" value="Thermonucl_AS"/>
</dbReference>
<dbReference type="InterPro" id="IPR002999">
    <property type="entry name" value="Tudor"/>
</dbReference>
<dbReference type="InterPro" id="IPR047386">
    <property type="entry name" value="Tudor_TDRD11"/>
</dbReference>
<dbReference type="PANTHER" id="PTHR12302">
    <property type="entry name" value="EBNA2 BINDING PROTEIN P100"/>
    <property type="match status" value="1"/>
</dbReference>
<dbReference type="PANTHER" id="PTHR12302:SF2">
    <property type="entry name" value="STAPHYLOCOCCAL NUCLEASE DOMAIN-CONTAINING PROTEIN 1"/>
    <property type="match status" value="1"/>
</dbReference>
<dbReference type="Pfam" id="PF00565">
    <property type="entry name" value="SNase"/>
    <property type="match status" value="5"/>
</dbReference>
<dbReference type="Pfam" id="PF00567">
    <property type="entry name" value="TUDOR"/>
    <property type="match status" value="1"/>
</dbReference>
<dbReference type="PIRSF" id="PIRSF017179">
    <property type="entry name" value="RISC-Tudor-SN"/>
    <property type="match status" value="1"/>
</dbReference>
<dbReference type="SMART" id="SM00318">
    <property type="entry name" value="SNc"/>
    <property type="match status" value="4"/>
</dbReference>
<dbReference type="SMART" id="SM00333">
    <property type="entry name" value="TUDOR"/>
    <property type="match status" value="1"/>
</dbReference>
<dbReference type="SUPFAM" id="SSF50199">
    <property type="entry name" value="Staphylococcal nuclease"/>
    <property type="match status" value="5"/>
</dbReference>
<dbReference type="SUPFAM" id="SSF63748">
    <property type="entry name" value="Tudor/PWWP/MBT"/>
    <property type="match status" value="1"/>
</dbReference>
<dbReference type="PROSITE" id="PS01284">
    <property type="entry name" value="TNASE_2"/>
    <property type="match status" value="1"/>
</dbReference>
<dbReference type="PROSITE" id="PS50830">
    <property type="entry name" value="TNASE_3"/>
    <property type="match status" value="4"/>
</dbReference>
<dbReference type="PROSITE" id="PS50304">
    <property type="entry name" value="TUDOR"/>
    <property type="match status" value="1"/>
</dbReference>
<protein>
    <recommendedName>
        <fullName>Staphylococcal nuclease domain-containing protein 1</fullName>
        <ecNumber evidence="2">3.1.31.1</ecNumber>
    </recommendedName>
    <alternativeName>
        <fullName>100 kDa coactivator</fullName>
    </alternativeName>
    <alternativeName>
        <fullName>p100 co-activator</fullName>
    </alternativeName>
</protein>
<comment type="function">
    <text evidence="2 6">Endonuclease that mediates miRNA decay of both protein-free and AGO2-loaded miRNAs (By similarity). As part of its function in miRNA decay, regulates mRNAs involved in G1-to-S phase transition (By similarity). Functions as a bridging factor between STAT6 and the basal transcription factor (By similarity). Plays a role in PIM1 regulation of MYB activity (By similarity). Functions as a transcriptional coactivator for STAT5 (PubMed:12819296).</text>
</comment>
<comment type="catalytic activity">
    <reaction evidence="2">
        <text>Endonucleolytic cleavage to nucleoside 3'-phosphates and 3'-phosphooligonucleotide end-products.</text>
        <dbReference type="EC" id="3.1.31.1"/>
    </reaction>
</comment>
<comment type="subunit">
    <text evidence="2 6 7">Forms a ternary complex with STAT6 and POLR2A (By similarity). Associates with the RNA-induced silencing complex (RISC) (PubMed:24882364). Interacts with the RISC components AGO2, FMR1 and TNRC6A. Interacts with GTF2E1 and GTF2E2 (By similarity). Interacts with PIM1 (By similarity). Interacts with STAT5 (PubMed:12819296). Interacts with SYT11 (via C2 2 domain); the interaction with SYT11 is direct (PubMed:24882364).</text>
</comment>
<comment type="interaction">
    <interactant intactId="EBI-529864">
        <id>Q78PY7</id>
    </interactant>
    <interactant intactId="EBI-774530">
        <id>Q80WJ7</id>
        <label>Mtdh</label>
    </interactant>
    <organismsDiffer>false</organismsDiffer>
    <experiments>4</experiments>
</comment>
<comment type="subcellular location">
    <subcellularLocation>
        <location evidence="2">Cytoplasm</location>
    </subcellularLocation>
    <subcellularLocation>
        <location evidence="2">Nucleus</location>
    </subcellularLocation>
    <subcellularLocation>
        <location evidence="2">Melanosome</location>
    </subcellularLocation>
    <text evidence="2">In IL-4 stimulated cells colocalizes with STAT6 in the nucleus.</text>
</comment>
<comment type="PTM">
    <text evidence="1">Phosphorylated by PIM1 in vitro.</text>
</comment>
<comment type="sequence caution" evidence="8">
    <conflict type="erroneous initiation">
        <sequence resource="EMBL-CDS" id="BAA84944"/>
    </conflict>
    <text>Truncated N-terminus.</text>
</comment>
<keyword id="KW-0007">Acetylation</keyword>
<keyword id="KW-0963">Cytoplasm</keyword>
<keyword id="KW-0255">Endonuclease</keyword>
<keyword id="KW-0378">Hydrolase</keyword>
<keyword id="KW-1017">Isopeptide bond</keyword>
<keyword id="KW-0540">Nuclease</keyword>
<keyword id="KW-0539">Nucleus</keyword>
<keyword id="KW-0597">Phosphoprotein</keyword>
<keyword id="KW-1185">Reference proteome</keyword>
<keyword id="KW-0677">Repeat</keyword>
<keyword id="KW-0804">Transcription</keyword>
<keyword id="KW-0805">Transcription regulation</keyword>
<keyword id="KW-0832">Ubl conjugation</keyword>
<feature type="initiator methionine" description="Removed" evidence="2">
    <location>
        <position position="1"/>
    </location>
</feature>
<feature type="chain" id="PRO_0000183181" description="Staphylococcal nuclease domain-containing protein 1">
    <location>
        <begin position="2"/>
        <end position="910"/>
    </location>
</feature>
<feature type="domain" description="TNase-like 1" evidence="5">
    <location>
        <begin position="18"/>
        <end position="166"/>
    </location>
</feature>
<feature type="domain" description="TNase-like 2" evidence="5">
    <location>
        <begin position="193"/>
        <end position="328"/>
    </location>
</feature>
<feature type="domain" description="TNase-like 3" evidence="5">
    <location>
        <begin position="341"/>
        <end position="496"/>
    </location>
</feature>
<feature type="domain" description="TNase-like 4" evidence="5">
    <location>
        <begin position="525"/>
        <end position="660"/>
    </location>
</feature>
<feature type="domain" description="Tudor" evidence="4">
    <location>
        <begin position="729"/>
        <end position="787"/>
    </location>
</feature>
<feature type="short sequence motif" description="Nuclear localization signal" evidence="3">
    <location>
        <begin position="321"/>
        <end position="325"/>
    </location>
</feature>
<feature type="short sequence motif" description="Nuclear localization signal" evidence="3">
    <location>
        <begin position="388"/>
        <end position="392"/>
    </location>
</feature>
<feature type="modified residue" description="N-acetylalanine" evidence="2">
    <location>
        <position position="2"/>
    </location>
</feature>
<feature type="modified residue" description="Phosphothreonine" evidence="2">
    <location>
        <position position="103"/>
    </location>
</feature>
<feature type="modified residue" description="N6-acetyllysine" evidence="2">
    <location>
        <position position="193"/>
    </location>
</feature>
<feature type="modified residue" description="Phosphothreonine" evidence="10">
    <location>
        <position position="235"/>
    </location>
</feature>
<feature type="modified residue" description="Phosphothreonine" evidence="2">
    <location>
        <position position="240"/>
    </location>
</feature>
<feature type="modified residue" description="Phosphoserine" evidence="10">
    <location>
        <position position="426"/>
    </location>
</feature>
<feature type="modified residue" description="N6-acetyllysine" evidence="11">
    <location>
        <position position="641"/>
    </location>
</feature>
<feature type="modified residue" description="Phosphoserine" evidence="2">
    <location>
        <position position="645"/>
    </location>
</feature>
<feature type="modified residue" description="Phosphothreonine" evidence="2">
    <location>
        <position position="779"/>
    </location>
</feature>
<feature type="modified residue" description="Phosphoserine" evidence="2">
    <location>
        <position position="785"/>
    </location>
</feature>
<feature type="modified residue" description="Phosphoserine" evidence="9 10">
    <location>
        <position position="909"/>
    </location>
</feature>
<feature type="cross-link" description="Glycyl lysine isopeptide (Lys-Gly) (interchain with G-Cter in SUMO2)" evidence="2">
    <location>
        <position position="513"/>
    </location>
</feature>
<feature type="sequence conflict" description="In Ref. 1; BAA84944." evidence="8" ref="1">
    <original>V</original>
    <variation>A</variation>
    <location>
        <position position="208"/>
    </location>
</feature>
<feature type="sequence conflict" description="In Ref. 1; BAA84944." evidence="8" ref="1">
    <location>
        <begin position="908"/>
        <end position="910"/>
    </location>
</feature>
<sequence length="910" mass="102088">MASSAQSSGSSGGPAVPTVQRGIVKMVLSGCAIIVRGQPRGGPPPERQINLSNIRAGNLARRAAATQPDGKDTPDEPWAFPAREFLRKKLIGKEVCFTIENKTPQGREYGMIYLGKDTNGENIAESLVAEGLATRREGMRANNPEQNRLSECEEQAKASKKGMWSEGNGSHTIRDLKYTIENPRHFVDSHHQKPVNAIIEHVRDGSVVRALLLPGHHLVTVMLSGIKCPTFRRETDGSETPEPFAAEAKFFTESRLLQRDVQIILESCHNQNLLGTILHPNGNITELLLKEGFARCVDWSIAVYTRGAEKLRAAERFAKERRLRIWRDYVPPTANLDQKDKQFVAKVMQVLNADAIVVKLNSGDYKTIHLSSIRPPRLEGDNIQDKNKKLRPLYDIPYMFEAREFLRKKLIGKKVNVTVDYIRPASPATETVPAFSERTCATVTIGGINIAEALVSKGLATVIRYRQDDDQRSSHYDELLAAEARAIKNGKGLHSKKEVPIHRVADISGDTQKAKQFLPFLQRAGRSEAVVEYVFSGSRLKLYLPKETCLITFLLAGIECPRGARNLPGLVQEGEPFSEEATLFTKELVLQREVEVEVESMDKAGNFIGWLHMDGANLSVLLVEQALSKVHFTAERSAYYKPLLSAEEAAKQRKEKVWAHYEERPVEEVMPVLEEKERSASYKPVFVTEITDDLHFYVQDVETGTQLEKLMENMRNDISSHPPVEGSYAPRRGEFCIAKFVDGEWYRARVEKVESPAKVHVFYIDYGNREILPSTRLGTLPPAFSTRVLPAQATEYAFAFIQVPQDEDARTDAVDSVVRDIQNTQCLLNVEHLSASCPHVTLQFADSKGDVGLGLVKEGLVMVEVRKEKQFQKVITEYLNAQESAKSARLNLWRYGDFRADDADEFGYSR</sequence>
<accession>Q78PY7</accession>
<accession>Q3TT46</accession>
<accession>Q922L5</accession>
<accession>Q9R0S1</accession>
<evidence type="ECO:0000250" key="1"/>
<evidence type="ECO:0000250" key="2">
    <source>
        <dbReference type="UniProtKB" id="Q7KZF4"/>
    </source>
</evidence>
<evidence type="ECO:0000255" key="3"/>
<evidence type="ECO:0000255" key="4">
    <source>
        <dbReference type="PROSITE-ProRule" id="PRU00211"/>
    </source>
</evidence>
<evidence type="ECO:0000255" key="5">
    <source>
        <dbReference type="PROSITE-ProRule" id="PRU00272"/>
    </source>
</evidence>
<evidence type="ECO:0000269" key="6">
    <source>
    </source>
</evidence>
<evidence type="ECO:0000269" key="7">
    <source>
    </source>
</evidence>
<evidence type="ECO:0000305" key="8"/>
<evidence type="ECO:0007744" key="9">
    <source>
    </source>
</evidence>
<evidence type="ECO:0007744" key="10">
    <source>
    </source>
</evidence>
<evidence type="ECO:0007744" key="11">
    <source>
    </source>
</evidence>
<reference key="1">
    <citation type="submission" date="1998-12" db="EMBL/GenBank/DDBJ databases">
        <title>Cloning and characterization of a cDNA encoding a mouse p100 co-activator.</title>
        <authorList>
            <person name="Tsuchiya N."/>
            <person name="Fukuda H."/>
            <person name="Yamaguchi A."/>
            <person name="Sugimura T."/>
            <person name="Nagao M."/>
            <person name="Nakagama H."/>
        </authorList>
    </citation>
    <scope>NUCLEOTIDE SEQUENCE [MRNA]</scope>
</reference>
<reference key="2">
    <citation type="journal article" date="2005" name="Science">
        <title>The transcriptional landscape of the mammalian genome.</title>
        <authorList>
            <person name="Carninci P."/>
            <person name="Kasukawa T."/>
            <person name="Katayama S."/>
            <person name="Gough J."/>
            <person name="Frith M.C."/>
            <person name="Maeda N."/>
            <person name="Oyama R."/>
            <person name="Ravasi T."/>
            <person name="Lenhard B."/>
            <person name="Wells C."/>
            <person name="Kodzius R."/>
            <person name="Shimokawa K."/>
            <person name="Bajic V.B."/>
            <person name="Brenner S.E."/>
            <person name="Batalov S."/>
            <person name="Forrest A.R."/>
            <person name="Zavolan M."/>
            <person name="Davis M.J."/>
            <person name="Wilming L.G."/>
            <person name="Aidinis V."/>
            <person name="Allen J.E."/>
            <person name="Ambesi-Impiombato A."/>
            <person name="Apweiler R."/>
            <person name="Aturaliya R.N."/>
            <person name="Bailey T.L."/>
            <person name="Bansal M."/>
            <person name="Baxter L."/>
            <person name="Beisel K.W."/>
            <person name="Bersano T."/>
            <person name="Bono H."/>
            <person name="Chalk A.M."/>
            <person name="Chiu K.P."/>
            <person name="Choudhary V."/>
            <person name="Christoffels A."/>
            <person name="Clutterbuck D.R."/>
            <person name="Crowe M.L."/>
            <person name="Dalla E."/>
            <person name="Dalrymple B.P."/>
            <person name="de Bono B."/>
            <person name="Della Gatta G."/>
            <person name="di Bernardo D."/>
            <person name="Down T."/>
            <person name="Engstrom P."/>
            <person name="Fagiolini M."/>
            <person name="Faulkner G."/>
            <person name="Fletcher C.F."/>
            <person name="Fukushima T."/>
            <person name="Furuno M."/>
            <person name="Futaki S."/>
            <person name="Gariboldi M."/>
            <person name="Georgii-Hemming P."/>
            <person name="Gingeras T.R."/>
            <person name="Gojobori T."/>
            <person name="Green R.E."/>
            <person name="Gustincich S."/>
            <person name="Harbers M."/>
            <person name="Hayashi Y."/>
            <person name="Hensch T.K."/>
            <person name="Hirokawa N."/>
            <person name="Hill D."/>
            <person name="Huminiecki L."/>
            <person name="Iacono M."/>
            <person name="Ikeo K."/>
            <person name="Iwama A."/>
            <person name="Ishikawa T."/>
            <person name="Jakt M."/>
            <person name="Kanapin A."/>
            <person name="Katoh M."/>
            <person name="Kawasawa Y."/>
            <person name="Kelso J."/>
            <person name="Kitamura H."/>
            <person name="Kitano H."/>
            <person name="Kollias G."/>
            <person name="Krishnan S.P."/>
            <person name="Kruger A."/>
            <person name="Kummerfeld S.K."/>
            <person name="Kurochkin I.V."/>
            <person name="Lareau L.F."/>
            <person name="Lazarevic D."/>
            <person name="Lipovich L."/>
            <person name="Liu J."/>
            <person name="Liuni S."/>
            <person name="McWilliam S."/>
            <person name="Madan Babu M."/>
            <person name="Madera M."/>
            <person name="Marchionni L."/>
            <person name="Matsuda H."/>
            <person name="Matsuzawa S."/>
            <person name="Miki H."/>
            <person name="Mignone F."/>
            <person name="Miyake S."/>
            <person name="Morris K."/>
            <person name="Mottagui-Tabar S."/>
            <person name="Mulder N."/>
            <person name="Nakano N."/>
            <person name="Nakauchi H."/>
            <person name="Ng P."/>
            <person name="Nilsson R."/>
            <person name="Nishiguchi S."/>
            <person name="Nishikawa S."/>
            <person name="Nori F."/>
            <person name="Ohara O."/>
            <person name="Okazaki Y."/>
            <person name="Orlando V."/>
            <person name="Pang K.C."/>
            <person name="Pavan W.J."/>
            <person name="Pavesi G."/>
            <person name="Pesole G."/>
            <person name="Petrovsky N."/>
            <person name="Piazza S."/>
            <person name="Reed J."/>
            <person name="Reid J.F."/>
            <person name="Ring B.Z."/>
            <person name="Ringwald M."/>
            <person name="Rost B."/>
            <person name="Ruan Y."/>
            <person name="Salzberg S.L."/>
            <person name="Sandelin A."/>
            <person name="Schneider C."/>
            <person name="Schoenbach C."/>
            <person name="Sekiguchi K."/>
            <person name="Semple C.A."/>
            <person name="Seno S."/>
            <person name="Sessa L."/>
            <person name="Sheng Y."/>
            <person name="Shibata Y."/>
            <person name="Shimada H."/>
            <person name="Shimada K."/>
            <person name="Silva D."/>
            <person name="Sinclair B."/>
            <person name="Sperling S."/>
            <person name="Stupka E."/>
            <person name="Sugiura K."/>
            <person name="Sultana R."/>
            <person name="Takenaka Y."/>
            <person name="Taki K."/>
            <person name="Tammoja K."/>
            <person name="Tan S.L."/>
            <person name="Tang S."/>
            <person name="Taylor M.S."/>
            <person name="Tegner J."/>
            <person name="Teichmann S.A."/>
            <person name="Ueda H.R."/>
            <person name="van Nimwegen E."/>
            <person name="Verardo R."/>
            <person name="Wei C.L."/>
            <person name="Yagi K."/>
            <person name="Yamanishi H."/>
            <person name="Zabarovsky E."/>
            <person name="Zhu S."/>
            <person name="Zimmer A."/>
            <person name="Hide W."/>
            <person name="Bult C."/>
            <person name="Grimmond S.M."/>
            <person name="Teasdale R.D."/>
            <person name="Liu E.T."/>
            <person name="Brusic V."/>
            <person name="Quackenbush J."/>
            <person name="Wahlestedt C."/>
            <person name="Mattick J.S."/>
            <person name="Hume D.A."/>
            <person name="Kai C."/>
            <person name="Sasaki D."/>
            <person name="Tomaru Y."/>
            <person name="Fukuda S."/>
            <person name="Kanamori-Katayama M."/>
            <person name="Suzuki M."/>
            <person name="Aoki J."/>
            <person name="Arakawa T."/>
            <person name="Iida J."/>
            <person name="Imamura K."/>
            <person name="Itoh M."/>
            <person name="Kato T."/>
            <person name="Kawaji H."/>
            <person name="Kawagashira N."/>
            <person name="Kawashima T."/>
            <person name="Kojima M."/>
            <person name="Kondo S."/>
            <person name="Konno H."/>
            <person name="Nakano K."/>
            <person name="Ninomiya N."/>
            <person name="Nishio T."/>
            <person name="Okada M."/>
            <person name="Plessy C."/>
            <person name="Shibata K."/>
            <person name="Shiraki T."/>
            <person name="Suzuki S."/>
            <person name="Tagami M."/>
            <person name="Waki K."/>
            <person name="Watahiki A."/>
            <person name="Okamura-Oho Y."/>
            <person name="Suzuki H."/>
            <person name="Kawai J."/>
            <person name="Hayashizaki Y."/>
        </authorList>
    </citation>
    <scope>NUCLEOTIDE SEQUENCE [LARGE SCALE MRNA]</scope>
    <source>
        <strain>C57BL/6J</strain>
        <strain>NOD</strain>
        <tissue>Pituitary</tissue>
        <tissue>Thymus</tissue>
    </source>
</reference>
<reference key="3">
    <citation type="journal article" date="2004" name="Genome Res.">
        <title>The status, quality, and expansion of the NIH full-length cDNA project: the Mammalian Gene Collection (MGC).</title>
        <authorList>
            <consortium name="The MGC Project Team"/>
        </authorList>
    </citation>
    <scope>NUCLEOTIDE SEQUENCE [LARGE SCALE MRNA]</scope>
    <source>
        <strain>FVB/N</strain>
        <tissue>Mammary tumor</tissue>
    </source>
</reference>
<reference key="4">
    <citation type="journal article" date="2003" name="Mol. Endocrinol.">
        <title>Tudor and nuclease-like domains containing protein p100 function as coactivators for signal transducer and activator of transcription 5.</title>
        <authorList>
            <person name="Paukku K."/>
            <person name="Yang J."/>
            <person name="Silvennoinen O."/>
        </authorList>
    </citation>
    <scope>FUNCTION</scope>
    <scope>INTERACTION WITH STAT5</scope>
</reference>
<reference key="5">
    <citation type="journal article" date="2007" name="Proc. Natl. Acad. Sci. U.S.A.">
        <title>Large-scale phosphorylation analysis of mouse liver.</title>
        <authorList>
            <person name="Villen J."/>
            <person name="Beausoleil S.A."/>
            <person name="Gerber S.A."/>
            <person name="Gygi S.P."/>
        </authorList>
    </citation>
    <scope>PHOSPHORYLATION [LARGE SCALE ANALYSIS] AT SER-909</scope>
    <scope>IDENTIFICATION BY MASS SPECTROMETRY [LARGE SCALE ANALYSIS]</scope>
    <source>
        <tissue>Liver</tissue>
    </source>
</reference>
<reference key="6">
    <citation type="journal article" date="2010" name="Cell">
        <title>A tissue-specific atlas of mouse protein phosphorylation and expression.</title>
        <authorList>
            <person name="Huttlin E.L."/>
            <person name="Jedrychowski M.P."/>
            <person name="Elias J.E."/>
            <person name="Goswami T."/>
            <person name="Rad R."/>
            <person name="Beausoleil S.A."/>
            <person name="Villen J."/>
            <person name="Haas W."/>
            <person name="Sowa M.E."/>
            <person name="Gygi S.P."/>
        </authorList>
    </citation>
    <scope>PHOSPHORYLATION [LARGE SCALE ANALYSIS] AT THR-235; SER-426 AND SER-909</scope>
    <scope>IDENTIFICATION BY MASS SPECTROMETRY [LARGE SCALE ANALYSIS]</scope>
    <source>
        <tissue>Brain</tissue>
        <tissue>Brown adipose tissue</tissue>
        <tissue>Heart</tissue>
        <tissue>Kidney</tissue>
        <tissue>Liver</tissue>
        <tissue>Lung</tissue>
        <tissue>Pancreas</tissue>
        <tissue>Spleen</tissue>
        <tissue>Testis</tissue>
    </source>
</reference>
<reference key="7">
    <citation type="journal article" date="2013" name="Mol. Cell">
        <title>SIRT5-mediated lysine desuccinylation impacts diverse metabolic pathways.</title>
        <authorList>
            <person name="Park J."/>
            <person name="Chen Y."/>
            <person name="Tishkoff D.X."/>
            <person name="Peng C."/>
            <person name="Tan M."/>
            <person name="Dai L."/>
            <person name="Xie Z."/>
            <person name="Zhang Y."/>
            <person name="Zwaans B.M."/>
            <person name="Skinner M.E."/>
            <person name="Lombard D.B."/>
            <person name="Zhao Y."/>
        </authorList>
    </citation>
    <scope>ACETYLATION [LARGE SCALE ANALYSIS] AT LYS-641</scope>
    <scope>IDENTIFICATION BY MASS SPECTROMETRY [LARGE SCALE ANALYSIS]</scope>
    <source>
        <tissue>Embryonic fibroblast</tissue>
    </source>
</reference>
<reference key="8">
    <citation type="journal article" date="2014" name="FEBS Lett.">
        <title>Synaptotagmin 11 interacts with components of the RNA-induced silencing complex RISC in clonal pancreatic beta-cells.</title>
        <authorList>
            <person name="Milochau A."/>
            <person name="Lagree V."/>
            <person name="Benassy M.N."/>
            <person name="Chaignepain S."/>
            <person name="Papin J."/>
            <person name="Garcia-Arcos I."/>
            <person name="Lajoix A."/>
            <person name="Monterrat C."/>
            <person name="Coudert L."/>
            <person name="Schmitter J.M."/>
            <person name="Ochoa B."/>
            <person name="Lang J."/>
        </authorList>
    </citation>
    <scope>INTERACTION WITH AGO2 AND SYT11</scope>
</reference>